<keyword id="KW-0153">Cholesterol metabolism</keyword>
<keyword id="KW-0325">Glycoprotein</keyword>
<keyword id="KW-0345">HDL</keyword>
<keyword id="KW-0443">Lipid metabolism</keyword>
<keyword id="KW-0445">Lipid transport</keyword>
<keyword id="KW-0449">Lipoprotein</keyword>
<keyword id="KW-0558">Oxidation</keyword>
<keyword id="KW-0564">Palmitate</keyword>
<keyword id="KW-0597">Phosphoprotein</keyword>
<keyword id="KW-1185">Reference proteome</keyword>
<keyword id="KW-0677">Repeat</keyword>
<keyword id="KW-0964">Secreted</keyword>
<keyword id="KW-0732">Signal</keyword>
<keyword id="KW-0753">Steroid metabolism</keyword>
<keyword id="KW-1207">Sterol metabolism</keyword>
<keyword id="KW-0813">Transport</keyword>
<protein>
    <recommendedName>
        <fullName>Apolipoprotein A-I</fullName>
        <shortName>Apo-AI</shortName>
        <shortName>ApoA-I</shortName>
    </recommendedName>
    <alternativeName>
        <fullName>Apolipoprotein A1</fullName>
    </alternativeName>
    <component>
        <recommendedName>
            <fullName>Proapolipoprotein A-I</fullName>
            <shortName>ProapoA-I</shortName>
        </recommendedName>
    </component>
    <component>
        <recommendedName>
            <fullName>Truncated apolipoprotein A-I</fullName>
        </recommendedName>
    </component>
</protein>
<organism>
    <name type="scientific">Chinchilla lanigera</name>
    <name type="common">Long-tailed chinchilla</name>
    <name type="synonym">Chinchilla villidera</name>
    <dbReference type="NCBI Taxonomy" id="34839"/>
    <lineage>
        <taxon>Eukaryota</taxon>
        <taxon>Metazoa</taxon>
        <taxon>Chordata</taxon>
        <taxon>Craniata</taxon>
        <taxon>Vertebrata</taxon>
        <taxon>Euteleostomi</taxon>
        <taxon>Mammalia</taxon>
        <taxon>Eutheria</taxon>
        <taxon>Euarchontoglires</taxon>
        <taxon>Glires</taxon>
        <taxon>Rodentia</taxon>
        <taxon>Hystricomorpha</taxon>
        <taxon>Chinchillidae</taxon>
        <taxon>Chinchilla</taxon>
    </lineage>
</organism>
<sequence>MKAVVLAVAVLFLTGSQARHFWQRDEPQTPWDRVKDFATVYVDAIKESGRDYVAQLETSVLGKHLNLKLLDNWDTLSTTFSKLRADLGPVTQEFWDNLEKDTEWLRQEMNKDLQEVKQKVQPYLDNFHKKMQEEMERYREKVGPLGTELREGARQKLQELQEKLTPLGEDLRDRAREHVDTLRTQLAPYSDDMRQRLTQRLEALRDSTTFADYQAKASEHLKTFSEKAKPALEDLRQGLLPVLESLKASILSSIDQATKQLTAQ</sequence>
<reference key="1">
    <citation type="submission" date="2012-05" db="EMBL/GenBank/DDBJ databases">
        <authorList>
            <person name="Di Palma F."/>
            <person name="Alfoldi J."/>
            <person name="Johnson J."/>
            <person name="Berlin A."/>
            <person name="Gnerre S."/>
            <person name="Jaffe D."/>
            <person name="MacCallum I."/>
            <person name="Young S."/>
            <person name="Walker B.J."/>
            <person name="Lindblad-Toh K."/>
        </authorList>
    </citation>
    <scope>NUCLEOTIDE SEQUENCE [LARGE SCALE GENOMIC DNA]</scope>
</reference>
<reference key="2">
    <citation type="unpublished observations" date="2014-12">
        <authorList>
            <person name="Puppione D.L."/>
        </authorList>
    </citation>
    <scope>IDENTIFICATION</scope>
</reference>
<gene>
    <name type="primary">APOA1</name>
</gene>
<feature type="signal peptide" evidence="6">
    <location>
        <begin position="1"/>
        <end position="18"/>
    </location>
</feature>
<feature type="chain" id="PRO_0000431998" description="Proapolipoprotein A-I">
    <location>
        <begin position="19"/>
        <end position="264"/>
    </location>
</feature>
<feature type="chain" id="PRO_0000431999" description="Apolipoprotein A-I">
    <location>
        <begin position="25"/>
        <end position="264"/>
    </location>
</feature>
<feature type="chain" id="PRO_0000432000" description="Truncated apolipoprotein A-I" evidence="3">
    <location>
        <begin position="25"/>
        <end position="263"/>
    </location>
</feature>
<feature type="repeat" description="1">
    <location>
        <begin position="67"/>
        <end position="88"/>
    </location>
</feature>
<feature type="repeat" description="2">
    <location>
        <begin position="89"/>
        <end position="110"/>
    </location>
</feature>
<feature type="repeat" description="3; half-length">
    <location>
        <begin position="111"/>
        <end position="121"/>
    </location>
</feature>
<feature type="repeat" description="4">
    <location>
        <begin position="122"/>
        <end position="143"/>
    </location>
</feature>
<feature type="repeat" description="5">
    <location>
        <begin position="144"/>
        <end position="165"/>
    </location>
</feature>
<feature type="repeat" description="6">
    <location>
        <begin position="166"/>
        <end position="187"/>
    </location>
</feature>
<feature type="repeat" description="7">
    <location>
        <begin position="188"/>
        <end position="207"/>
    </location>
</feature>
<feature type="repeat" description="8">
    <location>
        <begin position="208"/>
        <end position="229"/>
    </location>
</feature>
<feature type="repeat" description="9; half-length">
    <location>
        <begin position="230"/>
        <end position="240"/>
    </location>
</feature>
<feature type="repeat" description="10">
    <location>
        <begin position="241"/>
        <end position="264"/>
    </location>
</feature>
<feature type="region of interest" description="10 X approximate tandem repeats">
    <location>
        <begin position="67"/>
        <end position="264"/>
    </location>
</feature>
<feature type="modified residue" description="Methionine sulfoxide" evidence="3">
    <location>
        <position position="109"/>
    </location>
</feature>
<accession>P0DMS2</accession>
<proteinExistence type="inferred from homology"/>
<name>APOA1_CHILA</name>
<comment type="function">
    <text evidence="3">Participates in the reverse transport of cholesterol from tissues to the liver for excretion by promoting cholesterol efflux from tissues and by acting as a cofactor for the lecithin cholesterol acyltransferase (LCAT). As part of the SPAP complex, activates spermatozoa motility.</text>
</comment>
<comment type="subunit">
    <text evidence="2 3 5">Homodimer (By similarity). Interacts with APOA1BP and CLU. Component of a sperm activating protein complex (SPAP), consisting of APOA1, an immunoglobulin heavy chain, an immunoglobulin light chain and albumin. Interacts with NDRG1. Interacts with SCGB3A2 (By similarity). Interacts with NAXE and YJEFN3 (By similarity).</text>
</comment>
<comment type="subcellular location">
    <subcellularLocation>
        <location evidence="3">Secreted</location>
    </subcellularLocation>
</comment>
<comment type="PTM">
    <text evidence="4">Glycosylated.</text>
</comment>
<comment type="PTM">
    <text evidence="4">Palmitoylated.</text>
</comment>
<comment type="PTM">
    <text evidence="1">Phosphorylation sites are present in the extracellular medium.</text>
</comment>
<comment type="similarity">
    <text evidence="7">Belongs to the apolipoprotein A1/A4/E family.</text>
</comment>
<evidence type="ECO:0000250" key="1"/>
<evidence type="ECO:0000250" key="2">
    <source>
        <dbReference type="UniProtKB" id="G5BQH5"/>
    </source>
</evidence>
<evidence type="ECO:0000250" key="3">
    <source>
        <dbReference type="UniProtKB" id="P02647"/>
    </source>
</evidence>
<evidence type="ECO:0000250" key="4">
    <source>
        <dbReference type="UniProtKB" id="P02648"/>
    </source>
</evidence>
<evidence type="ECO:0000250" key="5">
    <source>
        <dbReference type="UniProtKB" id="P04639"/>
    </source>
</evidence>
<evidence type="ECO:0000255" key="6"/>
<evidence type="ECO:0000305" key="7"/>
<dbReference type="EMBL" id="AKZC01245818">
    <property type="status" value="NOT_ANNOTATED_CDS"/>
    <property type="molecule type" value="Genomic_DNA"/>
</dbReference>
<dbReference type="RefSeq" id="XP_005378250.1">
    <property type="nucleotide sequence ID" value="XM_005378193.2"/>
</dbReference>
<dbReference type="SMR" id="P0DMS2"/>
<dbReference type="Ensembl" id="ENSCLAT00000017002.1">
    <property type="protein sequence ID" value="ENSCLAP00000016837.1"/>
    <property type="gene ID" value="ENSCLAG00000011551.1"/>
</dbReference>
<dbReference type="GeneID" id="102023342"/>
<dbReference type="CTD" id="335"/>
<dbReference type="GeneTree" id="ENSGT00950000182929"/>
<dbReference type="OMA" id="EYVAQFE"/>
<dbReference type="OrthoDB" id="8727817at2759"/>
<dbReference type="Proteomes" id="UP000694398">
    <property type="component" value="Unassembled WGS sequence"/>
</dbReference>
<dbReference type="GO" id="GO:0042627">
    <property type="term" value="C:chylomicron"/>
    <property type="evidence" value="ECO:0007669"/>
    <property type="project" value="TreeGrafter"/>
</dbReference>
<dbReference type="GO" id="GO:0030139">
    <property type="term" value="C:endocytic vesicle"/>
    <property type="evidence" value="ECO:0007669"/>
    <property type="project" value="Ensembl"/>
</dbReference>
<dbReference type="GO" id="GO:1903561">
    <property type="term" value="C:extracellular vesicle"/>
    <property type="evidence" value="ECO:0007669"/>
    <property type="project" value="TreeGrafter"/>
</dbReference>
<dbReference type="GO" id="GO:0034362">
    <property type="term" value="C:low-density lipoprotein particle"/>
    <property type="evidence" value="ECO:0007669"/>
    <property type="project" value="TreeGrafter"/>
</dbReference>
<dbReference type="GO" id="GO:0034366">
    <property type="term" value="C:spherical high-density lipoprotein particle"/>
    <property type="evidence" value="ECO:0007669"/>
    <property type="project" value="Ensembl"/>
</dbReference>
<dbReference type="GO" id="GO:0034361">
    <property type="term" value="C:very-low-density lipoprotein particle"/>
    <property type="evidence" value="ECO:0007669"/>
    <property type="project" value="Ensembl"/>
</dbReference>
<dbReference type="GO" id="GO:0001540">
    <property type="term" value="F:amyloid-beta binding"/>
    <property type="evidence" value="ECO:0007669"/>
    <property type="project" value="Ensembl"/>
</dbReference>
<dbReference type="GO" id="GO:0034191">
    <property type="term" value="F:apolipoprotein A-I receptor binding"/>
    <property type="evidence" value="ECO:0007669"/>
    <property type="project" value="Ensembl"/>
</dbReference>
<dbReference type="GO" id="GO:0045499">
    <property type="term" value="F:chemorepellent activity"/>
    <property type="evidence" value="ECO:0007669"/>
    <property type="project" value="Ensembl"/>
</dbReference>
<dbReference type="GO" id="GO:0015485">
    <property type="term" value="F:cholesterol binding"/>
    <property type="evidence" value="ECO:0007669"/>
    <property type="project" value="Ensembl"/>
</dbReference>
<dbReference type="GO" id="GO:0120020">
    <property type="term" value="F:cholesterol transfer activity"/>
    <property type="evidence" value="ECO:0007669"/>
    <property type="project" value="Ensembl"/>
</dbReference>
<dbReference type="GO" id="GO:0019899">
    <property type="term" value="F:enzyme binding"/>
    <property type="evidence" value="ECO:0007669"/>
    <property type="project" value="Ensembl"/>
</dbReference>
<dbReference type="GO" id="GO:0031072">
    <property type="term" value="F:heat shock protein binding"/>
    <property type="evidence" value="ECO:0007669"/>
    <property type="project" value="Ensembl"/>
</dbReference>
<dbReference type="GO" id="GO:0008035">
    <property type="term" value="F:high-density lipoprotein particle binding"/>
    <property type="evidence" value="ECO:0007669"/>
    <property type="project" value="Ensembl"/>
</dbReference>
<dbReference type="GO" id="GO:0070653">
    <property type="term" value="F:high-density lipoprotein particle receptor binding"/>
    <property type="evidence" value="ECO:0007669"/>
    <property type="project" value="Ensembl"/>
</dbReference>
<dbReference type="GO" id="GO:0060228">
    <property type="term" value="F:phosphatidylcholine-sterol O-acyltransferase activator activity"/>
    <property type="evidence" value="ECO:0007669"/>
    <property type="project" value="Ensembl"/>
</dbReference>
<dbReference type="GO" id="GO:0005543">
    <property type="term" value="F:phospholipid binding"/>
    <property type="evidence" value="ECO:0007669"/>
    <property type="project" value="Ensembl"/>
</dbReference>
<dbReference type="GO" id="GO:0042803">
    <property type="term" value="F:protein homodimerization activity"/>
    <property type="evidence" value="ECO:0000250"/>
    <property type="project" value="UniProtKB"/>
</dbReference>
<dbReference type="GO" id="GO:0030325">
    <property type="term" value="P:adrenal gland development"/>
    <property type="evidence" value="ECO:0007669"/>
    <property type="project" value="Ensembl"/>
</dbReference>
<dbReference type="GO" id="GO:0034205">
    <property type="term" value="P:amyloid-beta formation"/>
    <property type="evidence" value="ECO:0007669"/>
    <property type="project" value="Ensembl"/>
</dbReference>
<dbReference type="GO" id="GO:0043534">
    <property type="term" value="P:blood vessel endothelial cell migration"/>
    <property type="evidence" value="ECO:0007669"/>
    <property type="project" value="Ensembl"/>
</dbReference>
<dbReference type="GO" id="GO:0071402">
    <property type="term" value="P:cellular response to lipoprotein particle stimulus"/>
    <property type="evidence" value="ECO:0007669"/>
    <property type="project" value="Ensembl"/>
</dbReference>
<dbReference type="GO" id="GO:0006695">
    <property type="term" value="P:cholesterol biosynthetic process"/>
    <property type="evidence" value="ECO:0007669"/>
    <property type="project" value="Ensembl"/>
</dbReference>
<dbReference type="GO" id="GO:0033344">
    <property type="term" value="P:cholesterol efflux"/>
    <property type="evidence" value="ECO:0007669"/>
    <property type="project" value="Ensembl"/>
</dbReference>
<dbReference type="GO" id="GO:0042632">
    <property type="term" value="P:cholesterol homeostasis"/>
    <property type="evidence" value="ECO:0007669"/>
    <property type="project" value="Ensembl"/>
</dbReference>
<dbReference type="GO" id="GO:0070508">
    <property type="term" value="P:cholesterol import"/>
    <property type="evidence" value="ECO:0007669"/>
    <property type="project" value="Ensembl"/>
</dbReference>
<dbReference type="GO" id="GO:0001935">
    <property type="term" value="P:endothelial cell proliferation"/>
    <property type="evidence" value="ECO:0007669"/>
    <property type="project" value="Ensembl"/>
</dbReference>
<dbReference type="GO" id="GO:0007186">
    <property type="term" value="P:G protein-coupled receptor signaling pathway"/>
    <property type="evidence" value="ECO:0007669"/>
    <property type="project" value="Ensembl"/>
</dbReference>
<dbReference type="GO" id="GO:0008211">
    <property type="term" value="P:glucocorticoid metabolic process"/>
    <property type="evidence" value="ECO:0007669"/>
    <property type="project" value="Ensembl"/>
</dbReference>
<dbReference type="GO" id="GO:0034380">
    <property type="term" value="P:high-density lipoprotein particle assembly"/>
    <property type="evidence" value="ECO:0007669"/>
    <property type="project" value="Ensembl"/>
</dbReference>
<dbReference type="GO" id="GO:0034375">
    <property type="term" value="P:high-density lipoprotein particle remodeling"/>
    <property type="evidence" value="ECO:0007669"/>
    <property type="project" value="Ensembl"/>
</dbReference>
<dbReference type="GO" id="GO:0007229">
    <property type="term" value="P:integrin-mediated signaling pathway"/>
    <property type="evidence" value="ECO:0007669"/>
    <property type="project" value="Ensembl"/>
</dbReference>
<dbReference type="GO" id="GO:0019915">
    <property type="term" value="P:lipid storage"/>
    <property type="evidence" value="ECO:0007669"/>
    <property type="project" value="Ensembl"/>
</dbReference>
<dbReference type="GO" id="GO:0042158">
    <property type="term" value="P:lipoprotein biosynthetic process"/>
    <property type="evidence" value="ECO:0007669"/>
    <property type="project" value="Ensembl"/>
</dbReference>
<dbReference type="GO" id="GO:0060354">
    <property type="term" value="P:negative regulation of cell adhesion molecule production"/>
    <property type="evidence" value="ECO:0007669"/>
    <property type="project" value="Ensembl"/>
</dbReference>
<dbReference type="GO" id="GO:0002719">
    <property type="term" value="P:negative regulation of cytokine production involved in immune response"/>
    <property type="evidence" value="ECO:0007669"/>
    <property type="project" value="Ensembl"/>
</dbReference>
<dbReference type="GO" id="GO:0034115">
    <property type="term" value="P:negative regulation of heterotypic cell-cell adhesion"/>
    <property type="evidence" value="ECO:0007669"/>
    <property type="project" value="Ensembl"/>
</dbReference>
<dbReference type="GO" id="GO:0050728">
    <property type="term" value="P:negative regulation of inflammatory response"/>
    <property type="evidence" value="ECO:0007669"/>
    <property type="project" value="Ensembl"/>
</dbReference>
<dbReference type="GO" id="GO:0032691">
    <property type="term" value="P:negative regulation of interleukin-1 beta production"/>
    <property type="evidence" value="ECO:0007669"/>
    <property type="project" value="Ensembl"/>
</dbReference>
<dbReference type="GO" id="GO:0010804">
    <property type="term" value="P:negative regulation of tumor necrosis factor-mediated signaling pathway"/>
    <property type="evidence" value="ECO:0007669"/>
    <property type="project" value="Ensembl"/>
</dbReference>
<dbReference type="GO" id="GO:0010903">
    <property type="term" value="P:negative regulation of very-low-density lipoprotein particle remodeling"/>
    <property type="evidence" value="ECO:0007669"/>
    <property type="project" value="Ensembl"/>
</dbReference>
<dbReference type="GO" id="GO:0006656">
    <property type="term" value="P:phosphatidylcholine biosynthetic process"/>
    <property type="evidence" value="ECO:0007669"/>
    <property type="project" value="Ensembl"/>
</dbReference>
<dbReference type="GO" id="GO:0033700">
    <property type="term" value="P:phospholipid efflux"/>
    <property type="evidence" value="ECO:0007669"/>
    <property type="project" value="Ensembl"/>
</dbReference>
<dbReference type="GO" id="GO:0055091">
    <property type="term" value="P:phospholipid homeostasis"/>
    <property type="evidence" value="ECO:0007669"/>
    <property type="project" value="Ensembl"/>
</dbReference>
<dbReference type="GO" id="GO:0010875">
    <property type="term" value="P:positive regulation of cholesterol efflux"/>
    <property type="evidence" value="ECO:0000250"/>
    <property type="project" value="UniProtKB"/>
</dbReference>
<dbReference type="GO" id="GO:0090205">
    <property type="term" value="P:positive regulation of cholesterol metabolic process"/>
    <property type="evidence" value="ECO:0007669"/>
    <property type="project" value="Ensembl"/>
</dbReference>
<dbReference type="GO" id="GO:0050766">
    <property type="term" value="P:positive regulation of phagocytosis"/>
    <property type="evidence" value="ECO:0000250"/>
    <property type="project" value="UniProtKB"/>
</dbReference>
<dbReference type="GO" id="GO:1902995">
    <property type="term" value="P:positive regulation of phospholipid efflux"/>
    <property type="evidence" value="ECO:0000250"/>
    <property type="project" value="UniProtKB"/>
</dbReference>
<dbReference type="GO" id="GO:0035025">
    <property type="term" value="P:positive regulation of Rho protein signal transduction"/>
    <property type="evidence" value="ECO:0007669"/>
    <property type="project" value="Ensembl"/>
</dbReference>
<dbReference type="GO" id="GO:0051496">
    <property type="term" value="P:positive regulation of stress fiber assembly"/>
    <property type="evidence" value="ECO:0007669"/>
    <property type="project" value="Ensembl"/>
</dbReference>
<dbReference type="GO" id="GO:1900026">
    <property type="term" value="P:positive regulation of substrate adhesion-dependent cell spreading"/>
    <property type="evidence" value="ECO:0007669"/>
    <property type="project" value="Ensembl"/>
</dbReference>
<dbReference type="GO" id="GO:0050821">
    <property type="term" value="P:protein stabilization"/>
    <property type="evidence" value="ECO:0000250"/>
    <property type="project" value="UniProtKB"/>
</dbReference>
<dbReference type="GO" id="GO:0032489">
    <property type="term" value="P:regulation of Cdc42 protein signal transduction"/>
    <property type="evidence" value="ECO:0007669"/>
    <property type="project" value="Ensembl"/>
</dbReference>
<dbReference type="GO" id="GO:0030300">
    <property type="term" value="P:regulation of intestinal cholesterol absorption"/>
    <property type="evidence" value="ECO:0007669"/>
    <property type="project" value="Ensembl"/>
</dbReference>
<dbReference type="GO" id="GO:0043691">
    <property type="term" value="P:reverse cholesterol transport"/>
    <property type="evidence" value="ECO:0007669"/>
    <property type="project" value="Ensembl"/>
</dbReference>
<dbReference type="GO" id="GO:0070328">
    <property type="term" value="P:triglyceride homeostasis"/>
    <property type="evidence" value="ECO:0007669"/>
    <property type="project" value="Ensembl"/>
</dbReference>
<dbReference type="GO" id="GO:0051180">
    <property type="term" value="P:vitamin transport"/>
    <property type="evidence" value="ECO:0007669"/>
    <property type="project" value="Ensembl"/>
</dbReference>
<dbReference type="FunFam" id="1.20.120.20:FF:000001">
    <property type="entry name" value="Apolipoprotein A-I"/>
    <property type="match status" value="1"/>
</dbReference>
<dbReference type="FunFam" id="1.20.5.20:FF:000001">
    <property type="entry name" value="apolipoprotein A-I"/>
    <property type="match status" value="1"/>
</dbReference>
<dbReference type="Gene3D" id="1.20.5.20">
    <property type="match status" value="1"/>
</dbReference>
<dbReference type="Gene3D" id="6.10.140.380">
    <property type="match status" value="1"/>
</dbReference>
<dbReference type="Gene3D" id="1.20.120.20">
    <property type="entry name" value="Apolipoprotein"/>
    <property type="match status" value="1"/>
</dbReference>
<dbReference type="InterPro" id="IPR000074">
    <property type="entry name" value="ApoA_E"/>
</dbReference>
<dbReference type="InterPro" id="IPR050163">
    <property type="entry name" value="Apolipoprotein_A1/A4/E"/>
</dbReference>
<dbReference type="PANTHER" id="PTHR18976">
    <property type="entry name" value="APOLIPOPROTEIN"/>
    <property type="match status" value="1"/>
</dbReference>
<dbReference type="PANTHER" id="PTHR18976:SF11">
    <property type="entry name" value="APOLIPOPROTEIN A-I"/>
    <property type="match status" value="1"/>
</dbReference>
<dbReference type="Pfam" id="PF01442">
    <property type="entry name" value="Apolipoprotein"/>
    <property type="match status" value="1"/>
</dbReference>
<dbReference type="SUPFAM" id="SSF58113">
    <property type="entry name" value="Apolipoprotein A-I"/>
    <property type="match status" value="1"/>
</dbReference>